<protein>
    <recommendedName>
        <fullName>Soluble scavenger receptor cysteine-rich domain-containing protein SSC5D</fullName>
    </recommendedName>
    <alternativeName>
        <fullName>Scavenger receptor cysteine-rich domain-containing protein LOC284297 homolog</fullName>
    </alternativeName>
</protein>
<name>SRCRL_MOUSE</name>
<organism>
    <name type="scientific">Mus musculus</name>
    <name type="common">Mouse</name>
    <dbReference type="NCBI Taxonomy" id="10090"/>
    <lineage>
        <taxon>Eukaryota</taxon>
        <taxon>Metazoa</taxon>
        <taxon>Chordata</taxon>
        <taxon>Craniata</taxon>
        <taxon>Vertebrata</taxon>
        <taxon>Euteleostomi</taxon>
        <taxon>Mammalia</taxon>
        <taxon>Eutheria</taxon>
        <taxon>Euarchontoglires</taxon>
        <taxon>Glires</taxon>
        <taxon>Rodentia</taxon>
        <taxon>Myomorpha</taxon>
        <taxon>Muroidea</taxon>
        <taxon>Muridae</taxon>
        <taxon>Murinae</taxon>
        <taxon>Mus</taxon>
        <taxon>Mus</taxon>
    </lineage>
</organism>
<proteinExistence type="evidence at protein level"/>
<keyword id="KW-0963">Cytoplasm</keyword>
<keyword id="KW-0217">Developmental protein</keyword>
<keyword id="KW-1015">Disulfide bond</keyword>
<keyword id="KW-0325">Glycoprotein</keyword>
<keyword id="KW-0391">Immunity</keyword>
<keyword id="KW-0399">Innate immunity</keyword>
<keyword id="KW-0675">Receptor</keyword>
<keyword id="KW-1185">Reference proteome</keyword>
<keyword id="KW-0677">Repeat</keyword>
<keyword id="KW-0964">Secreted</keyword>
<keyword id="KW-0732">Signal</keyword>
<evidence type="ECO:0000255" key="1"/>
<evidence type="ECO:0000255" key="2">
    <source>
        <dbReference type="PROSITE-ProRule" id="PRU00196"/>
    </source>
</evidence>
<evidence type="ECO:0000256" key="3">
    <source>
        <dbReference type="SAM" id="MobiDB-lite"/>
    </source>
</evidence>
<evidence type="ECO:0000269" key="4">
    <source>
    </source>
</evidence>
<evidence type="ECO:0000305" key="5"/>
<dbReference type="EMBL" id="EU850434">
    <property type="protein sequence ID" value="ACF54723.1"/>
    <property type="molecule type" value="mRNA"/>
</dbReference>
<dbReference type="EMBL" id="AK079906">
    <property type="protein sequence ID" value="BAC37780.1"/>
    <property type="molecule type" value="mRNA"/>
</dbReference>
<dbReference type="EMBL" id="AK165666">
    <property type="protein sequence ID" value="BAE38328.1"/>
    <property type="molecule type" value="mRNA"/>
</dbReference>
<dbReference type="EMBL" id="CH466627">
    <property type="protein sequence ID" value="EDL31272.1"/>
    <property type="molecule type" value="Genomic_DNA"/>
</dbReference>
<dbReference type="EMBL" id="BC141044">
    <property type="protein sequence ID" value="AAI41045.1"/>
    <property type="molecule type" value="mRNA"/>
</dbReference>
<dbReference type="CCDS" id="CCDS20750.1"/>
<dbReference type="RefSeq" id="NP_766596.1">
    <property type="nucleotide sequence ID" value="NM_173008.3"/>
</dbReference>
<dbReference type="SMR" id="Q8BV57"/>
<dbReference type="FunCoup" id="Q8BV57">
    <property type="interactions" value="73"/>
</dbReference>
<dbReference type="STRING" id="10090.ENSMUSP00000052126"/>
<dbReference type="GlyCosmos" id="Q8BV57">
    <property type="glycosylation" value="4 sites, No reported glycans"/>
</dbReference>
<dbReference type="GlyGen" id="Q8BV57">
    <property type="glycosylation" value="6 sites"/>
</dbReference>
<dbReference type="PhosphoSitePlus" id="Q8BV57"/>
<dbReference type="jPOST" id="Q8BV57"/>
<dbReference type="PaxDb" id="10090-ENSMUSP00000052126"/>
<dbReference type="PeptideAtlas" id="Q8BV57"/>
<dbReference type="ProteomicsDB" id="257066"/>
<dbReference type="Pumba" id="Q8BV57"/>
<dbReference type="Antibodypedia" id="50987">
    <property type="antibodies" value="60 antibodies from 12 providers"/>
</dbReference>
<dbReference type="DNASU" id="269855"/>
<dbReference type="Ensembl" id="ENSMUST00000057612.9">
    <property type="protein sequence ID" value="ENSMUSP00000052126.8"/>
    <property type="gene ID" value="ENSMUSG00000035279.9"/>
</dbReference>
<dbReference type="GeneID" id="269855"/>
<dbReference type="KEGG" id="mmu:269855"/>
<dbReference type="UCSC" id="uc009eza.1">
    <property type="organism name" value="mouse"/>
</dbReference>
<dbReference type="AGR" id="MGI:3606211"/>
<dbReference type="CTD" id="284297"/>
<dbReference type="MGI" id="MGI:3606211">
    <property type="gene designation" value="Ssc5d"/>
</dbReference>
<dbReference type="VEuPathDB" id="HostDB:ENSMUSG00000035279"/>
<dbReference type="eggNOG" id="ENOG502SECN">
    <property type="taxonomic scope" value="Eukaryota"/>
</dbReference>
<dbReference type="GeneTree" id="ENSGT00940000162592"/>
<dbReference type="HOGENOM" id="CLU_004182_0_0_1"/>
<dbReference type="InParanoid" id="Q8BV57"/>
<dbReference type="OMA" id="WTWDTPS"/>
<dbReference type="OrthoDB" id="81149at9989"/>
<dbReference type="PhylomeDB" id="Q8BV57"/>
<dbReference type="TreeFam" id="TF329295"/>
<dbReference type="BioGRID-ORCS" id="269855">
    <property type="hits" value="2 hits in 76 CRISPR screens"/>
</dbReference>
<dbReference type="ChiTaRS" id="Ssc5d">
    <property type="organism name" value="mouse"/>
</dbReference>
<dbReference type="PRO" id="PR:Q8BV57"/>
<dbReference type="Proteomes" id="UP000000589">
    <property type="component" value="Chromosome 7"/>
</dbReference>
<dbReference type="RNAct" id="Q8BV57">
    <property type="molecule type" value="protein"/>
</dbReference>
<dbReference type="Bgee" id="ENSMUSG00000035279">
    <property type="expression patterns" value="Expressed in retinal neural layer and 96 other cell types or tissues"/>
</dbReference>
<dbReference type="GO" id="GO:0062023">
    <property type="term" value="C:collagen-containing extracellular matrix"/>
    <property type="evidence" value="ECO:0000314"/>
    <property type="project" value="UniProtKB"/>
</dbReference>
<dbReference type="GO" id="GO:0005737">
    <property type="term" value="C:cytoplasm"/>
    <property type="evidence" value="ECO:0007669"/>
    <property type="project" value="UniProtKB-SubCell"/>
</dbReference>
<dbReference type="GO" id="GO:0005576">
    <property type="term" value="C:extracellular region"/>
    <property type="evidence" value="ECO:0000304"/>
    <property type="project" value="Reactome"/>
</dbReference>
<dbReference type="GO" id="GO:0005615">
    <property type="term" value="C:extracellular space"/>
    <property type="evidence" value="ECO:0000314"/>
    <property type="project" value="UniProtKB"/>
</dbReference>
<dbReference type="GO" id="GO:0016020">
    <property type="term" value="C:membrane"/>
    <property type="evidence" value="ECO:0007669"/>
    <property type="project" value="InterPro"/>
</dbReference>
<dbReference type="GO" id="GO:0050840">
    <property type="term" value="F:extracellular matrix binding"/>
    <property type="evidence" value="ECO:0000314"/>
    <property type="project" value="UniProtKB"/>
</dbReference>
<dbReference type="GO" id="GO:0001968">
    <property type="term" value="F:fibronectin binding"/>
    <property type="evidence" value="ECO:0000314"/>
    <property type="project" value="UniProtKB"/>
</dbReference>
<dbReference type="GO" id="GO:0043236">
    <property type="term" value="F:laminin binding"/>
    <property type="evidence" value="ECO:0000314"/>
    <property type="project" value="UniProtKB"/>
</dbReference>
<dbReference type="GO" id="GO:0005044">
    <property type="term" value="F:scavenger receptor activity"/>
    <property type="evidence" value="ECO:0000314"/>
    <property type="project" value="UniProtKB"/>
</dbReference>
<dbReference type="GO" id="GO:0006952">
    <property type="term" value="P:defense response"/>
    <property type="evidence" value="ECO:0000314"/>
    <property type="project" value="MGI"/>
</dbReference>
<dbReference type="GO" id="GO:0050829">
    <property type="term" value="P:defense response to Gram-negative bacterium"/>
    <property type="evidence" value="ECO:0000314"/>
    <property type="project" value="UniProtKB"/>
</dbReference>
<dbReference type="GO" id="GO:0050830">
    <property type="term" value="P:defense response to Gram-positive bacterium"/>
    <property type="evidence" value="ECO:0000314"/>
    <property type="project" value="UniProtKB"/>
</dbReference>
<dbReference type="GO" id="GO:0042494">
    <property type="term" value="P:detection of bacterial lipoprotein"/>
    <property type="evidence" value="ECO:0000314"/>
    <property type="project" value="UniProtKB"/>
</dbReference>
<dbReference type="GO" id="GO:0045087">
    <property type="term" value="P:innate immune response"/>
    <property type="evidence" value="ECO:0000303"/>
    <property type="project" value="UniProtKB"/>
</dbReference>
<dbReference type="GO" id="GO:0032717">
    <property type="term" value="P:negative regulation of interleukin-8 production"/>
    <property type="evidence" value="ECO:0000314"/>
    <property type="project" value="UniProtKB"/>
</dbReference>
<dbReference type="GO" id="GO:0032677">
    <property type="term" value="P:regulation of interleukin-8 production"/>
    <property type="evidence" value="ECO:0000314"/>
    <property type="project" value="MGI"/>
</dbReference>
<dbReference type="FunFam" id="3.10.250.10:FF:000007">
    <property type="entry name" value="Soluble scavenger receptor cysteine-rich domain-containing protein SSC5D"/>
    <property type="match status" value="5"/>
</dbReference>
<dbReference type="Gene3D" id="3.10.250.10">
    <property type="entry name" value="SRCR-like domain"/>
    <property type="match status" value="5"/>
</dbReference>
<dbReference type="InterPro" id="IPR001190">
    <property type="entry name" value="SRCR"/>
</dbReference>
<dbReference type="InterPro" id="IPR036772">
    <property type="entry name" value="SRCR-like_dom_sf"/>
</dbReference>
<dbReference type="PANTHER" id="PTHR19331">
    <property type="entry name" value="SCAVENGER RECEPTOR DOMAIN-CONTAINING"/>
    <property type="match status" value="1"/>
</dbReference>
<dbReference type="PANTHER" id="PTHR19331:SF487">
    <property type="entry name" value="SOLUBLE SCAVENGER RECEPTOR CYSTEINE-RICH DOMAIN-CONTAINING PROTEIN SSC5D"/>
    <property type="match status" value="1"/>
</dbReference>
<dbReference type="Pfam" id="PF00530">
    <property type="entry name" value="SRCR"/>
    <property type="match status" value="5"/>
</dbReference>
<dbReference type="PRINTS" id="PR00258">
    <property type="entry name" value="SPERACTRCPTR"/>
</dbReference>
<dbReference type="SMART" id="SM00202">
    <property type="entry name" value="SR"/>
    <property type="match status" value="5"/>
</dbReference>
<dbReference type="SUPFAM" id="SSF56487">
    <property type="entry name" value="SRCR-like"/>
    <property type="match status" value="5"/>
</dbReference>
<dbReference type="PROSITE" id="PS00420">
    <property type="entry name" value="SRCR_1"/>
    <property type="match status" value="5"/>
</dbReference>
<dbReference type="PROSITE" id="PS50287">
    <property type="entry name" value="SRCR_2"/>
    <property type="match status" value="5"/>
</dbReference>
<comment type="function">
    <text evidence="4">Binds to extracellular matrix proteins. Binds to pathogen-associated molecular patterns (PAMPs) present on the cell walls of Gram-positive and Gram-negative bacteria and fungi, behaving as a pattern recognition receptor (PRR). Induces bacterial and fungal aggregation and subsequent inhibition of PAMP-induced cytokine release. Does not possess intrinsic bactericidal activity. May play a role in the innate defense and homeostasis of certain epithelial surfaces.</text>
</comment>
<comment type="subunit">
    <text evidence="4">Interacts with LGALS1 and laminin.</text>
</comment>
<comment type="subcellular location">
    <subcellularLocation>
        <location evidence="4">Secreted</location>
    </subcellularLocation>
    <subcellularLocation>
        <location evidence="4">Cytoplasm</location>
    </subcellularLocation>
</comment>
<comment type="tissue specificity">
    <text evidence="4">Detected throughout the gastrointestinal and genitourinary tracts, in serosal salivary gland, the exocrine part of pancreas and testis, as well as in a few tubular structures in kidney. Not detected in lung and heart (at protein level). Strongly expressed in testis, kidney and pancreas, with lower levels detected in bone marrow, spleen, lung, liver, colon, stomach and skeletal muscle. Very low levels or no expression detected in thymus, esophagus, jejunum, ileum, duodenum, ovary, uterus, heart, trachea, brain, cerebellum and bladder.</text>
</comment>
<comment type="developmental stage">
    <text evidence="4">At 9.5 dpc, detected in placodes, ectodermal thickenings where organs or structures will develop. Expression levels increase substantially between 9 and 14 dpc.</text>
</comment>
<comment type="PTM">
    <text evidence="4">Partially N- and O-glycosylated.</text>
</comment>
<feature type="signal peptide" evidence="1">
    <location>
        <begin position="1"/>
        <end position="16"/>
    </location>
</feature>
<feature type="chain" id="PRO_0000332986" description="Soluble scavenger receptor cysteine-rich domain-containing protein SSC5D">
    <location>
        <begin position="17"/>
        <end position="1371"/>
    </location>
</feature>
<feature type="domain" description="SRCR 1" evidence="2">
    <location>
        <begin position="20"/>
        <end position="120"/>
    </location>
</feature>
<feature type="domain" description="SRCR 2" evidence="2">
    <location>
        <begin position="199"/>
        <end position="299"/>
    </location>
</feature>
<feature type="domain" description="SRCR 3" evidence="2">
    <location>
        <begin position="305"/>
        <end position="405"/>
    </location>
</feature>
<feature type="domain" description="SRCR 4" evidence="2">
    <location>
        <begin position="464"/>
        <end position="565"/>
    </location>
</feature>
<feature type="domain" description="SRCR 5" evidence="2">
    <location>
        <begin position="758"/>
        <end position="858"/>
    </location>
</feature>
<feature type="region of interest" description="Disordered" evidence="3">
    <location>
        <begin position="143"/>
        <end position="200"/>
    </location>
</feature>
<feature type="region of interest" description="Disordered" evidence="3">
    <location>
        <begin position="431"/>
        <end position="466"/>
    </location>
</feature>
<feature type="region of interest" description="Disordered" evidence="3">
    <location>
        <begin position="592"/>
        <end position="756"/>
    </location>
</feature>
<feature type="region of interest" description="Disordered" evidence="3">
    <location>
        <begin position="888"/>
        <end position="1270"/>
    </location>
</feature>
<feature type="region of interest" description="Disordered" evidence="3">
    <location>
        <begin position="1351"/>
        <end position="1371"/>
    </location>
</feature>
<feature type="compositionally biased region" description="Low complexity" evidence="3">
    <location>
        <begin position="143"/>
        <end position="154"/>
    </location>
</feature>
<feature type="compositionally biased region" description="Pro residues" evidence="3">
    <location>
        <begin position="439"/>
        <end position="456"/>
    </location>
</feature>
<feature type="compositionally biased region" description="Polar residues" evidence="3">
    <location>
        <begin position="599"/>
        <end position="611"/>
    </location>
</feature>
<feature type="compositionally biased region" description="Basic residues" evidence="3">
    <location>
        <begin position="622"/>
        <end position="633"/>
    </location>
</feature>
<feature type="compositionally biased region" description="Polar residues" evidence="3">
    <location>
        <begin position="653"/>
        <end position="663"/>
    </location>
</feature>
<feature type="compositionally biased region" description="Basic and acidic residues" evidence="3">
    <location>
        <begin position="665"/>
        <end position="676"/>
    </location>
</feature>
<feature type="compositionally biased region" description="Polar residues" evidence="3">
    <location>
        <begin position="698"/>
        <end position="740"/>
    </location>
</feature>
<feature type="compositionally biased region" description="Low complexity" evidence="3">
    <location>
        <begin position="741"/>
        <end position="755"/>
    </location>
</feature>
<feature type="compositionally biased region" description="Polar residues" evidence="3">
    <location>
        <begin position="894"/>
        <end position="912"/>
    </location>
</feature>
<feature type="compositionally biased region" description="Low complexity" evidence="3">
    <location>
        <begin position="936"/>
        <end position="957"/>
    </location>
</feature>
<feature type="compositionally biased region" description="Low complexity" evidence="3">
    <location>
        <begin position="981"/>
        <end position="1004"/>
    </location>
</feature>
<feature type="compositionally biased region" description="Low complexity" evidence="3">
    <location>
        <begin position="1018"/>
        <end position="1035"/>
    </location>
</feature>
<feature type="compositionally biased region" description="Polar residues" evidence="3">
    <location>
        <begin position="1039"/>
        <end position="1086"/>
    </location>
</feature>
<feature type="compositionally biased region" description="Polar residues" evidence="3">
    <location>
        <begin position="1102"/>
        <end position="1148"/>
    </location>
</feature>
<feature type="compositionally biased region" description="Pro residues" evidence="3">
    <location>
        <begin position="1149"/>
        <end position="1163"/>
    </location>
</feature>
<feature type="compositionally biased region" description="Polar residues" evidence="3">
    <location>
        <begin position="1164"/>
        <end position="1189"/>
    </location>
</feature>
<feature type="compositionally biased region" description="Low complexity" evidence="3">
    <location>
        <begin position="1218"/>
        <end position="1230"/>
    </location>
</feature>
<feature type="compositionally biased region" description="Polar residues" evidence="3">
    <location>
        <begin position="1244"/>
        <end position="1261"/>
    </location>
</feature>
<feature type="glycosylation site" description="N-linked (GlcNAc...) asparagine" evidence="1">
    <location>
        <position position="377"/>
    </location>
</feature>
<feature type="glycosylation site" description="N-linked (GlcNAc...) asparagine" evidence="1">
    <location>
        <position position="422"/>
    </location>
</feature>
<feature type="glycosylation site" description="N-linked (GlcNAc...) asparagine" evidence="1">
    <location>
        <position position="1044"/>
    </location>
</feature>
<feature type="glycosylation site" description="N-linked (GlcNAc...) asparagine" evidence="1">
    <location>
        <position position="1131"/>
    </location>
</feature>
<feature type="disulfide bond" evidence="2">
    <location>
        <begin position="45"/>
        <end position="109"/>
    </location>
</feature>
<feature type="disulfide bond" evidence="2">
    <location>
        <begin position="58"/>
        <end position="119"/>
    </location>
</feature>
<feature type="disulfide bond" evidence="2">
    <location>
        <begin position="89"/>
        <end position="99"/>
    </location>
</feature>
<feature type="disulfide bond" evidence="2">
    <location>
        <begin position="224"/>
        <end position="288"/>
    </location>
</feature>
<feature type="disulfide bond" evidence="2">
    <location>
        <begin position="237"/>
        <end position="298"/>
    </location>
</feature>
<feature type="disulfide bond" evidence="2">
    <location>
        <begin position="268"/>
        <end position="278"/>
    </location>
</feature>
<feature type="disulfide bond" evidence="2">
    <location>
        <begin position="330"/>
        <end position="394"/>
    </location>
</feature>
<feature type="disulfide bond" evidence="2">
    <location>
        <begin position="343"/>
        <end position="404"/>
    </location>
</feature>
<feature type="disulfide bond" evidence="2">
    <location>
        <begin position="374"/>
        <end position="384"/>
    </location>
</feature>
<feature type="disulfide bond" evidence="2">
    <location>
        <begin position="489"/>
        <end position="554"/>
    </location>
</feature>
<feature type="disulfide bond" evidence="2">
    <location>
        <begin position="502"/>
        <end position="564"/>
    </location>
</feature>
<feature type="disulfide bond" evidence="2">
    <location>
        <begin position="534"/>
        <end position="544"/>
    </location>
</feature>
<feature type="disulfide bond" evidence="2">
    <location>
        <begin position="783"/>
        <end position="847"/>
    </location>
</feature>
<feature type="disulfide bond" evidence="2">
    <location>
        <begin position="796"/>
        <end position="857"/>
    </location>
</feature>
<feature type="disulfide bond" evidence="2">
    <location>
        <begin position="827"/>
        <end position="837"/>
    </location>
</feature>
<feature type="sequence conflict" description="In Ref. 2; BAE38328, 3; EDL31272 and 4; AAI41045." evidence="5" ref="2 3 4">
    <original>R</original>
    <variation>K</variation>
    <location>
        <position position="633"/>
    </location>
</feature>
<reference key="1">
    <citation type="journal article" date="2011" name="J. Immunol.">
        <title>Molecular and functional characterization of mouse S5D-SRCRB: a new group B member of the scavenger receptor cysteine-rich superfamily.</title>
        <authorList>
            <person name="Miro-Julia C."/>
            <person name="Rosello S."/>
            <person name="Martinez V.G."/>
            <person name="Fink D.R."/>
            <person name="Escoda-Ferran C."/>
            <person name="Padilla O."/>
            <person name="Vazquez-Echeverria C."/>
            <person name="Espinal-Marin P."/>
            <person name="Pujades C."/>
            <person name="Garcia-Pardo A."/>
            <person name="Vila J."/>
            <person name="Serra-Pages C."/>
            <person name="Holmskov U."/>
            <person name="Yelamos J."/>
            <person name="Lozano F."/>
        </authorList>
    </citation>
    <scope>NUCLEOTIDE SEQUENCE [MRNA]</scope>
    <scope>FUNCTION</scope>
    <scope>INTERACTION WITH LGALS1 AND LAMININ</scope>
    <scope>SUBCELLULAR LOCATION</scope>
    <scope>TISSUE SPECIFICITY</scope>
    <scope>DEVELOPMENTAL STAGE</scope>
    <scope>GLYCOSYLATION</scope>
    <source>
        <strain>C57BL/6J</strain>
        <tissue>Thymus</tissue>
    </source>
</reference>
<reference key="2">
    <citation type="journal article" date="2005" name="Science">
        <title>The transcriptional landscape of the mammalian genome.</title>
        <authorList>
            <person name="Carninci P."/>
            <person name="Kasukawa T."/>
            <person name="Katayama S."/>
            <person name="Gough J."/>
            <person name="Frith M.C."/>
            <person name="Maeda N."/>
            <person name="Oyama R."/>
            <person name="Ravasi T."/>
            <person name="Lenhard B."/>
            <person name="Wells C."/>
            <person name="Kodzius R."/>
            <person name="Shimokawa K."/>
            <person name="Bajic V.B."/>
            <person name="Brenner S.E."/>
            <person name="Batalov S."/>
            <person name="Forrest A.R."/>
            <person name="Zavolan M."/>
            <person name="Davis M.J."/>
            <person name="Wilming L.G."/>
            <person name="Aidinis V."/>
            <person name="Allen J.E."/>
            <person name="Ambesi-Impiombato A."/>
            <person name="Apweiler R."/>
            <person name="Aturaliya R.N."/>
            <person name="Bailey T.L."/>
            <person name="Bansal M."/>
            <person name="Baxter L."/>
            <person name="Beisel K.W."/>
            <person name="Bersano T."/>
            <person name="Bono H."/>
            <person name="Chalk A.M."/>
            <person name="Chiu K.P."/>
            <person name="Choudhary V."/>
            <person name="Christoffels A."/>
            <person name="Clutterbuck D.R."/>
            <person name="Crowe M.L."/>
            <person name="Dalla E."/>
            <person name="Dalrymple B.P."/>
            <person name="de Bono B."/>
            <person name="Della Gatta G."/>
            <person name="di Bernardo D."/>
            <person name="Down T."/>
            <person name="Engstrom P."/>
            <person name="Fagiolini M."/>
            <person name="Faulkner G."/>
            <person name="Fletcher C.F."/>
            <person name="Fukushima T."/>
            <person name="Furuno M."/>
            <person name="Futaki S."/>
            <person name="Gariboldi M."/>
            <person name="Georgii-Hemming P."/>
            <person name="Gingeras T.R."/>
            <person name="Gojobori T."/>
            <person name="Green R.E."/>
            <person name="Gustincich S."/>
            <person name="Harbers M."/>
            <person name="Hayashi Y."/>
            <person name="Hensch T.K."/>
            <person name="Hirokawa N."/>
            <person name="Hill D."/>
            <person name="Huminiecki L."/>
            <person name="Iacono M."/>
            <person name="Ikeo K."/>
            <person name="Iwama A."/>
            <person name="Ishikawa T."/>
            <person name="Jakt M."/>
            <person name="Kanapin A."/>
            <person name="Katoh M."/>
            <person name="Kawasawa Y."/>
            <person name="Kelso J."/>
            <person name="Kitamura H."/>
            <person name="Kitano H."/>
            <person name="Kollias G."/>
            <person name="Krishnan S.P."/>
            <person name="Kruger A."/>
            <person name="Kummerfeld S.K."/>
            <person name="Kurochkin I.V."/>
            <person name="Lareau L.F."/>
            <person name="Lazarevic D."/>
            <person name="Lipovich L."/>
            <person name="Liu J."/>
            <person name="Liuni S."/>
            <person name="McWilliam S."/>
            <person name="Madan Babu M."/>
            <person name="Madera M."/>
            <person name="Marchionni L."/>
            <person name="Matsuda H."/>
            <person name="Matsuzawa S."/>
            <person name="Miki H."/>
            <person name="Mignone F."/>
            <person name="Miyake S."/>
            <person name="Morris K."/>
            <person name="Mottagui-Tabar S."/>
            <person name="Mulder N."/>
            <person name="Nakano N."/>
            <person name="Nakauchi H."/>
            <person name="Ng P."/>
            <person name="Nilsson R."/>
            <person name="Nishiguchi S."/>
            <person name="Nishikawa S."/>
            <person name="Nori F."/>
            <person name="Ohara O."/>
            <person name="Okazaki Y."/>
            <person name="Orlando V."/>
            <person name="Pang K.C."/>
            <person name="Pavan W.J."/>
            <person name="Pavesi G."/>
            <person name="Pesole G."/>
            <person name="Petrovsky N."/>
            <person name="Piazza S."/>
            <person name="Reed J."/>
            <person name="Reid J.F."/>
            <person name="Ring B.Z."/>
            <person name="Ringwald M."/>
            <person name="Rost B."/>
            <person name="Ruan Y."/>
            <person name="Salzberg S.L."/>
            <person name="Sandelin A."/>
            <person name="Schneider C."/>
            <person name="Schoenbach C."/>
            <person name="Sekiguchi K."/>
            <person name="Semple C.A."/>
            <person name="Seno S."/>
            <person name="Sessa L."/>
            <person name="Sheng Y."/>
            <person name="Shibata Y."/>
            <person name="Shimada H."/>
            <person name="Shimada K."/>
            <person name="Silva D."/>
            <person name="Sinclair B."/>
            <person name="Sperling S."/>
            <person name="Stupka E."/>
            <person name="Sugiura K."/>
            <person name="Sultana R."/>
            <person name="Takenaka Y."/>
            <person name="Taki K."/>
            <person name="Tammoja K."/>
            <person name="Tan S.L."/>
            <person name="Tang S."/>
            <person name="Taylor M.S."/>
            <person name="Tegner J."/>
            <person name="Teichmann S.A."/>
            <person name="Ueda H.R."/>
            <person name="van Nimwegen E."/>
            <person name="Verardo R."/>
            <person name="Wei C.L."/>
            <person name="Yagi K."/>
            <person name="Yamanishi H."/>
            <person name="Zabarovsky E."/>
            <person name="Zhu S."/>
            <person name="Zimmer A."/>
            <person name="Hide W."/>
            <person name="Bult C."/>
            <person name="Grimmond S.M."/>
            <person name="Teasdale R.D."/>
            <person name="Liu E.T."/>
            <person name="Brusic V."/>
            <person name="Quackenbush J."/>
            <person name="Wahlestedt C."/>
            <person name="Mattick J.S."/>
            <person name="Hume D.A."/>
            <person name="Kai C."/>
            <person name="Sasaki D."/>
            <person name="Tomaru Y."/>
            <person name="Fukuda S."/>
            <person name="Kanamori-Katayama M."/>
            <person name="Suzuki M."/>
            <person name="Aoki J."/>
            <person name="Arakawa T."/>
            <person name="Iida J."/>
            <person name="Imamura K."/>
            <person name="Itoh M."/>
            <person name="Kato T."/>
            <person name="Kawaji H."/>
            <person name="Kawagashira N."/>
            <person name="Kawashima T."/>
            <person name="Kojima M."/>
            <person name="Kondo S."/>
            <person name="Konno H."/>
            <person name="Nakano K."/>
            <person name="Ninomiya N."/>
            <person name="Nishio T."/>
            <person name="Okada M."/>
            <person name="Plessy C."/>
            <person name="Shibata K."/>
            <person name="Shiraki T."/>
            <person name="Suzuki S."/>
            <person name="Tagami M."/>
            <person name="Waki K."/>
            <person name="Watahiki A."/>
            <person name="Okamura-Oho Y."/>
            <person name="Suzuki H."/>
            <person name="Kawai J."/>
            <person name="Hayashizaki Y."/>
        </authorList>
    </citation>
    <scope>NUCLEOTIDE SEQUENCE [LARGE SCALE MRNA]</scope>
    <source>
        <strain>C57BL/6J</strain>
        <tissue>Thymus</tissue>
    </source>
</reference>
<reference key="3">
    <citation type="submission" date="2005-07" db="EMBL/GenBank/DDBJ databases">
        <authorList>
            <person name="Mural R.J."/>
            <person name="Adams M.D."/>
            <person name="Myers E.W."/>
            <person name="Smith H.O."/>
            <person name="Venter J.C."/>
        </authorList>
    </citation>
    <scope>NUCLEOTIDE SEQUENCE [LARGE SCALE GENOMIC DNA]</scope>
</reference>
<reference key="4">
    <citation type="journal article" date="2004" name="Genome Res.">
        <title>The status, quality, and expansion of the NIH full-length cDNA project: the Mammalian Gene Collection (MGC).</title>
        <authorList>
            <consortium name="The MGC Project Team"/>
        </authorList>
    </citation>
    <scope>NUCLEOTIDE SEQUENCE [LARGE SCALE MRNA]</scope>
</reference>
<accession>Q8BV57</accession>
<accession>B2RUB0</accession>
<accession>C6ZFQ2</accession>
<accession>Q3TMW2</accession>
<gene>
    <name type="primary">Ssc5d</name>
    <name type="synonym">S5D-SRCRB</name>
</gene>
<sequence length="1371" mass="144637">MRGLACLLAMLVGIQAIERLRLADGPHGCAGRLEVWHSGRWGTVCDDGWDLRDAEVACRVLGCGGALAAPGGAFFGEGTGPVWLSELNCRGNEGQLGICPHRGWKAHICSHEEDAGVVCVGQRAANSREDSMSLLDGDPWLALSGELSPSSEEPPITHAPQPAASSQNGPRKKNPRPPKQTKSTRAPVLTNGAPHQERLRLVSGPHGCAGRLEVWHGGRWGTVCDDGWDLRDAAVACRELGCGGALAAPGGARFGPGEGPVWMDDVGCGGGEEALRDCPRSPWGRSNCDHTEDAGLVCTGPAPRIRLADGPHGCAGRLEVWHGGRWGSVCDDAWDLRDAAVACKELGCGGALAAPGGAFFGEGTGPIILDDLRCRGNETALRFCPARPWGQHDCHHREDAGAVCDGMPLGAVQPTVPAVDSNSTAHRLLSTSVGQMPGPAGPWPPSASPTAPPEPGPEAGSPQLRLVAGPSRCSGRLEVWHDGRWGTVCDDSWDMRDSAVVCRELGCGRPRQPDPAAGRFGWGAGPIWLDDVGCMGTEASLSECPAASWGKHNCAHNEDVGVTCTGTPGLDTISDPFSWSWLPGLGRDQDAWLPGELTTKPSASLTSSVPQKPTKVPGKAPKSTKKWVTKNARRPTTQPPGMPTTKHSRAPGTPTSLHPTARTSELPKRLTTEAPHRQTSHTTVRLTPRVPWEWTSEPVVSQSTQGPQEVTSEATTTENPQTSLEPSGENTEGSLESSQDPATTPTAGVPVPSGPFRVRLADGPNRCAGRLEVWHAGLWGTVCDDSWDIRDATVACWELGCGKVRPRVGKTHYGPGTGPIWLDDMGCKGSEMSLSDCPSGAWGKHNCDHEEDVVLTCTGYTGDDDYPSWTWDPTSGEDLTKGTTVAARPGHTLSWATTTNTEVPSPATQNLPDTDDQGGYESSWTWDTPSGRGLFKGTPTTTKPGSTVTTSTSKSPGHPFPAPRARAGSPRKPTPERRPLPTSATTSSPASSSSPEPSGSRQTSGSWPQLIPDSKQEGTSSSPKPSLLTPGLPSPATFALSTPNTSLLPTRSPELSGSPTPTSPEGLTSASSMLSEVSRLSPTSELTPGPDTTPAPEIIPESSDSSDLPMNTRTPTQPFTASHPTSIPQLNTTSYPTIAPQPTTNPQQPRSPHPATSPQPPTNTHPSSTPATPTESLPSSRKTELSSPTKPRLNSELTFEEAPSTDASQTQNLELFLASESGPSSPSPASNLDPLPTDAFKPPRSQTLHSASDHLTQGPTPNHNPDPFGPCVSPLPPVRVMACEPPALVELVGAVREVGDQLQRLTWVLEQDRQERQVLALGLAQLVEAAQGLGQLSETVKRLAEVAWPPSTPVPMTTTTEEEERPLRGDV</sequence>